<organism>
    <name type="scientific">Danio rerio</name>
    <name type="common">Zebrafish</name>
    <name type="synonym">Brachydanio rerio</name>
    <dbReference type="NCBI Taxonomy" id="7955"/>
    <lineage>
        <taxon>Eukaryota</taxon>
        <taxon>Metazoa</taxon>
        <taxon>Chordata</taxon>
        <taxon>Craniata</taxon>
        <taxon>Vertebrata</taxon>
        <taxon>Euteleostomi</taxon>
        <taxon>Actinopterygii</taxon>
        <taxon>Neopterygii</taxon>
        <taxon>Teleostei</taxon>
        <taxon>Ostariophysi</taxon>
        <taxon>Cypriniformes</taxon>
        <taxon>Danionidae</taxon>
        <taxon>Danioninae</taxon>
        <taxon>Danio</taxon>
    </lineage>
</organism>
<evidence type="ECO:0000255" key="1">
    <source>
        <dbReference type="PROSITE-ProRule" id="PRU00490"/>
    </source>
</evidence>
<evidence type="ECO:0000256" key="2">
    <source>
        <dbReference type="SAM" id="MobiDB-lite"/>
    </source>
</evidence>
<evidence type="ECO:0000305" key="3"/>
<gene>
    <name type="primary">gdap2</name>
</gene>
<protein>
    <recommendedName>
        <fullName>Ganglioside-induced differentiation-associated protein 2</fullName>
    </recommendedName>
</protein>
<name>GDAP2_DANRE</name>
<dbReference type="EMBL" id="BC081629">
    <property type="protein sequence ID" value="AAH81629.1"/>
    <property type="molecule type" value="mRNA"/>
</dbReference>
<dbReference type="RefSeq" id="NP_001004563.1">
    <property type="nucleotide sequence ID" value="NM_001004563.1"/>
</dbReference>
<dbReference type="SMR" id="Q66HX8"/>
<dbReference type="FunCoup" id="Q66HX8">
    <property type="interactions" value="1490"/>
</dbReference>
<dbReference type="STRING" id="7955.ENSDARP00000030237"/>
<dbReference type="PaxDb" id="7955-ENSDARP00000030237"/>
<dbReference type="GeneID" id="447824"/>
<dbReference type="KEGG" id="dre:447824"/>
<dbReference type="AGR" id="ZFIN:ZDB-GENE-040912-31"/>
<dbReference type="CTD" id="54834"/>
<dbReference type="ZFIN" id="ZDB-GENE-040912-31">
    <property type="gene designation" value="gdap2"/>
</dbReference>
<dbReference type="eggNOG" id="KOG2633">
    <property type="taxonomic scope" value="Eukaryota"/>
</dbReference>
<dbReference type="InParanoid" id="Q66HX8"/>
<dbReference type="OrthoDB" id="365077at2759"/>
<dbReference type="PhylomeDB" id="Q66HX8"/>
<dbReference type="PRO" id="PR:Q66HX8"/>
<dbReference type="Proteomes" id="UP000000437">
    <property type="component" value="Chromosome 9"/>
</dbReference>
<dbReference type="CDD" id="cd02905">
    <property type="entry name" value="Macro_GDAP2-like"/>
    <property type="match status" value="1"/>
</dbReference>
<dbReference type="CDD" id="cd00170">
    <property type="entry name" value="SEC14"/>
    <property type="match status" value="1"/>
</dbReference>
<dbReference type="Gene3D" id="3.40.525.10">
    <property type="entry name" value="CRAL-TRIO lipid binding domain"/>
    <property type="match status" value="1"/>
</dbReference>
<dbReference type="Gene3D" id="3.40.220.10">
    <property type="entry name" value="Leucine Aminopeptidase, subunit E, domain 1"/>
    <property type="match status" value="1"/>
</dbReference>
<dbReference type="InterPro" id="IPR001251">
    <property type="entry name" value="CRAL-TRIO_dom"/>
</dbReference>
<dbReference type="InterPro" id="IPR036865">
    <property type="entry name" value="CRAL-TRIO_dom_sf"/>
</dbReference>
<dbReference type="InterPro" id="IPR002589">
    <property type="entry name" value="Macro_dom"/>
</dbReference>
<dbReference type="InterPro" id="IPR043472">
    <property type="entry name" value="Macro_dom-like"/>
</dbReference>
<dbReference type="InterPro" id="IPR035793">
    <property type="entry name" value="Macro_GDAP2"/>
</dbReference>
<dbReference type="PANTHER" id="PTHR11106">
    <property type="entry name" value="GANGLIOSIDE INDUCED DIFFERENTIATION ASSOCIATED PROTEIN 2-RELATED"/>
    <property type="match status" value="1"/>
</dbReference>
<dbReference type="PANTHER" id="PTHR11106:SF72">
    <property type="entry name" value="GANGLIOSIDE-INDUCED DIFFERENTIATION-ASSOCIATED PROTEIN 2"/>
    <property type="match status" value="1"/>
</dbReference>
<dbReference type="Pfam" id="PF13716">
    <property type="entry name" value="CRAL_TRIO_2"/>
    <property type="match status" value="1"/>
</dbReference>
<dbReference type="Pfam" id="PF01661">
    <property type="entry name" value="Macro"/>
    <property type="match status" value="1"/>
</dbReference>
<dbReference type="SMART" id="SM00506">
    <property type="entry name" value="A1pp"/>
    <property type="match status" value="1"/>
</dbReference>
<dbReference type="SMART" id="SM00516">
    <property type="entry name" value="SEC14"/>
    <property type="match status" value="1"/>
</dbReference>
<dbReference type="SUPFAM" id="SSF52087">
    <property type="entry name" value="CRAL/TRIO domain"/>
    <property type="match status" value="1"/>
</dbReference>
<dbReference type="SUPFAM" id="SSF52949">
    <property type="entry name" value="Macro domain-like"/>
    <property type="match status" value="1"/>
</dbReference>
<dbReference type="PROSITE" id="PS51154">
    <property type="entry name" value="MACRO"/>
    <property type="match status" value="1"/>
</dbReference>
<sequence>MDPLGARSQFVEVLNLPTWDQPQGVQDELDGENHYEEEEEEEEDNLTNQLNSVNSPFTFRQDINNKIVLFNGDVALLNCTAIVNTSNETLTDKNPISDSIHRHAGPELRDELLKLKGCRTGEAKMTEGFDLAARFIIHTVGPKYKAKYRTAAESSLYSCYRNVLQLAKEHAMVSVGFCVISTVKRAYPVEDATHIALRTVRRFLENHGENIETLVFAVSDVEEPVYRKLLPLYYPRSKQEERISLPLLPADIGNSEGEPVVPERQIRIAEKPVNLEDDPEDDSLDSDLGLVGSHAFARMEGDVDKQRKLILQGQMSEVAQQKQHQRNYNRWLCKARAEDLSDIAALKALYQTGVDLCGRTVMVVVGRNIPVMLIDMEKALLYFIHVMDHITVKEYVMVYFHTLTGEHNHLDTDFLKKLYDIVDAKFKKNLRAFYFVHPTFRSKVSTWFFTTFSVSGLKDKVHHIENLQQLFTCVLPEQIDIPPFVLEYDSRVNSPYYSAQSAGL</sequence>
<feature type="chain" id="PRO_0000331398" description="Ganglioside-induced differentiation-associated protein 2">
    <location>
        <begin position="1"/>
        <end position="504"/>
    </location>
</feature>
<feature type="domain" description="Macro" evidence="1">
    <location>
        <begin position="54"/>
        <end position="234"/>
    </location>
</feature>
<feature type="domain" description="CRAL-TRIO">
    <location>
        <begin position="342"/>
        <end position="490"/>
    </location>
</feature>
<feature type="region of interest" description="Disordered" evidence="2">
    <location>
        <begin position="20"/>
        <end position="46"/>
    </location>
</feature>
<feature type="compositionally biased region" description="Acidic residues" evidence="2">
    <location>
        <begin position="27"/>
        <end position="45"/>
    </location>
</feature>
<reference key="1">
    <citation type="submission" date="2004-09" db="EMBL/GenBank/DDBJ databases">
        <authorList>
            <consortium name="NIH - Zebrafish Gene Collection (ZGC) project"/>
        </authorList>
    </citation>
    <scope>NUCLEOTIDE SEQUENCE [LARGE SCALE MRNA]</scope>
</reference>
<accession>Q66HX8</accession>
<comment type="similarity">
    <text evidence="3">Belongs to the GDAP2 family.</text>
</comment>
<proteinExistence type="evidence at transcript level"/>
<keyword id="KW-1185">Reference proteome</keyword>